<organism>
    <name type="scientific">Koribacter versatilis (strain Ellin345)</name>
    <dbReference type="NCBI Taxonomy" id="204669"/>
    <lineage>
        <taxon>Bacteria</taxon>
        <taxon>Pseudomonadati</taxon>
        <taxon>Acidobacteriota</taxon>
        <taxon>Terriglobia</taxon>
        <taxon>Terriglobales</taxon>
        <taxon>Candidatus Korobacteraceae</taxon>
        <taxon>Candidatus Korobacter</taxon>
    </lineage>
</organism>
<evidence type="ECO:0000255" key="1">
    <source>
        <dbReference type="HAMAP-Rule" id="MF_00013"/>
    </source>
</evidence>
<evidence type="ECO:0000255" key="2">
    <source>
        <dbReference type="PROSITE-ProRule" id="PRU01067"/>
    </source>
</evidence>
<reference key="1">
    <citation type="journal article" date="2009" name="Appl. Environ. Microbiol.">
        <title>Three genomes from the phylum Acidobacteria provide insight into the lifestyles of these microorganisms in soils.</title>
        <authorList>
            <person name="Ward N.L."/>
            <person name="Challacombe J.F."/>
            <person name="Janssen P.H."/>
            <person name="Henrissat B."/>
            <person name="Coutinho P.M."/>
            <person name="Wu M."/>
            <person name="Xie G."/>
            <person name="Haft D.H."/>
            <person name="Sait M."/>
            <person name="Badger J."/>
            <person name="Barabote R.D."/>
            <person name="Bradley B."/>
            <person name="Brettin T.S."/>
            <person name="Brinkac L.M."/>
            <person name="Bruce D."/>
            <person name="Creasy T."/>
            <person name="Daugherty S.C."/>
            <person name="Davidsen T.M."/>
            <person name="DeBoy R.T."/>
            <person name="Detter J.C."/>
            <person name="Dodson R.J."/>
            <person name="Durkin A.S."/>
            <person name="Ganapathy A."/>
            <person name="Gwinn-Giglio M."/>
            <person name="Han C.S."/>
            <person name="Khouri H."/>
            <person name="Kiss H."/>
            <person name="Kothari S.P."/>
            <person name="Madupu R."/>
            <person name="Nelson K.E."/>
            <person name="Nelson W.C."/>
            <person name="Paulsen I."/>
            <person name="Penn K."/>
            <person name="Ren Q."/>
            <person name="Rosovitz M.J."/>
            <person name="Selengut J.D."/>
            <person name="Shrivastava S."/>
            <person name="Sullivan S.A."/>
            <person name="Tapia R."/>
            <person name="Thompson L.S."/>
            <person name="Watkins K.L."/>
            <person name="Yang Q."/>
            <person name="Yu C."/>
            <person name="Zafar N."/>
            <person name="Zhou L."/>
            <person name="Kuske C.R."/>
        </authorList>
    </citation>
    <scope>NUCLEOTIDE SEQUENCE [LARGE SCALE GENOMIC DNA]</scope>
    <source>
        <strain>Ellin345</strain>
    </source>
</reference>
<name>LIPB_KORVE</name>
<protein>
    <recommendedName>
        <fullName evidence="1">Octanoyltransferase</fullName>
        <ecNumber evidence="1">2.3.1.181</ecNumber>
    </recommendedName>
    <alternativeName>
        <fullName evidence="1">Lipoate-protein ligase B</fullName>
    </alternativeName>
    <alternativeName>
        <fullName evidence="1">Lipoyl/octanoyl transferase</fullName>
    </alternativeName>
    <alternativeName>
        <fullName evidence="1">Octanoyl-[acyl-carrier-protein]-protein N-octanoyltransferase</fullName>
    </alternativeName>
</protein>
<sequence>MIQVLNLGHVDYTTAQQLQTTLVDLRKRGVIQDTLLLLEHSPVITMGRNAKQKNIVASQEILAQRGVELIECDRGGDVTFHGPGQLVGYPIFDLRSLNPKIGVIEYVRRIEEVLIRSCGDLGIPTTRVEGLTGVWTVNEPQAKIAAIGVHISRAVTSHGFALNVTTDLDYFKLIVPCGISDKPVTSMQHELGKSLTLEEVMPVITRNFGFIFKEQVLWLESLNDLLPTPEDLPARAPETLRRLHEDDLHLG</sequence>
<dbReference type="EC" id="2.3.1.181" evidence="1"/>
<dbReference type="EMBL" id="CP000360">
    <property type="protein sequence ID" value="ABF43305.1"/>
    <property type="molecule type" value="Genomic_DNA"/>
</dbReference>
<dbReference type="RefSeq" id="WP_011525102.1">
    <property type="nucleotide sequence ID" value="NC_008009.1"/>
</dbReference>
<dbReference type="SMR" id="Q1IIJ5"/>
<dbReference type="STRING" id="204669.Acid345_4305"/>
<dbReference type="EnsemblBacteria" id="ABF43305">
    <property type="protein sequence ID" value="ABF43305"/>
    <property type="gene ID" value="Acid345_4305"/>
</dbReference>
<dbReference type="KEGG" id="aba:Acid345_4305"/>
<dbReference type="eggNOG" id="COG0321">
    <property type="taxonomic scope" value="Bacteria"/>
</dbReference>
<dbReference type="HOGENOM" id="CLU_035168_1_1_0"/>
<dbReference type="OrthoDB" id="9787061at2"/>
<dbReference type="UniPathway" id="UPA00538">
    <property type="reaction ID" value="UER00592"/>
</dbReference>
<dbReference type="Proteomes" id="UP000002432">
    <property type="component" value="Chromosome"/>
</dbReference>
<dbReference type="GO" id="GO:0005737">
    <property type="term" value="C:cytoplasm"/>
    <property type="evidence" value="ECO:0007669"/>
    <property type="project" value="UniProtKB-SubCell"/>
</dbReference>
<dbReference type="GO" id="GO:0033819">
    <property type="term" value="F:lipoyl(octanoyl) transferase activity"/>
    <property type="evidence" value="ECO:0007669"/>
    <property type="project" value="UniProtKB-EC"/>
</dbReference>
<dbReference type="GO" id="GO:0036211">
    <property type="term" value="P:protein modification process"/>
    <property type="evidence" value="ECO:0007669"/>
    <property type="project" value="InterPro"/>
</dbReference>
<dbReference type="CDD" id="cd16444">
    <property type="entry name" value="LipB"/>
    <property type="match status" value="1"/>
</dbReference>
<dbReference type="Gene3D" id="3.30.930.10">
    <property type="entry name" value="Bira Bifunctional Protein, Domain 2"/>
    <property type="match status" value="1"/>
</dbReference>
<dbReference type="HAMAP" id="MF_00013">
    <property type="entry name" value="LipB"/>
    <property type="match status" value="1"/>
</dbReference>
<dbReference type="InterPro" id="IPR045864">
    <property type="entry name" value="aa-tRNA-synth_II/BPL/LPL"/>
</dbReference>
<dbReference type="InterPro" id="IPR004143">
    <property type="entry name" value="BPL_LPL_catalytic"/>
</dbReference>
<dbReference type="InterPro" id="IPR000544">
    <property type="entry name" value="Octanoyltransferase"/>
</dbReference>
<dbReference type="InterPro" id="IPR020605">
    <property type="entry name" value="Octanoyltransferase_CS"/>
</dbReference>
<dbReference type="NCBIfam" id="TIGR00214">
    <property type="entry name" value="lipB"/>
    <property type="match status" value="1"/>
</dbReference>
<dbReference type="NCBIfam" id="NF010925">
    <property type="entry name" value="PRK14345.1"/>
    <property type="match status" value="1"/>
</dbReference>
<dbReference type="PANTHER" id="PTHR10993:SF7">
    <property type="entry name" value="LIPOYLTRANSFERASE 2, MITOCHONDRIAL-RELATED"/>
    <property type="match status" value="1"/>
</dbReference>
<dbReference type="PANTHER" id="PTHR10993">
    <property type="entry name" value="OCTANOYLTRANSFERASE"/>
    <property type="match status" value="1"/>
</dbReference>
<dbReference type="Pfam" id="PF21948">
    <property type="entry name" value="LplA-B_cat"/>
    <property type="match status" value="1"/>
</dbReference>
<dbReference type="PIRSF" id="PIRSF016262">
    <property type="entry name" value="LPLase"/>
    <property type="match status" value="1"/>
</dbReference>
<dbReference type="SUPFAM" id="SSF55681">
    <property type="entry name" value="Class II aaRS and biotin synthetases"/>
    <property type="match status" value="1"/>
</dbReference>
<dbReference type="PROSITE" id="PS51733">
    <property type="entry name" value="BPL_LPL_CATALYTIC"/>
    <property type="match status" value="1"/>
</dbReference>
<dbReference type="PROSITE" id="PS01313">
    <property type="entry name" value="LIPB"/>
    <property type="match status" value="1"/>
</dbReference>
<comment type="function">
    <text evidence="1">Catalyzes the transfer of endogenously produced octanoic acid from octanoyl-acyl-carrier-protein onto the lipoyl domains of lipoate-dependent enzymes. Lipoyl-ACP can also act as a substrate although octanoyl-ACP is likely to be the physiological substrate.</text>
</comment>
<comment type="catalytic activity">
    <reaction evidence="1">
        <text>octanoyl-[ACP] + L-lysyl-[protein] = N(6)-octanoyl-L-lysyl-[protein] + holo-[ACP] + H(+)</text>
        <dbReference type="Rhea" id="RHEA:17665"/>
        <dbReference type="Rhea" id="RHEA-COMP:9636"/>
        <dbReference type="Rhea" id="RHEA-COMP:9685"/>
        <dbReference type="Rhea" id="RHEA-COMP:9752"/>
        <dbReference type="Rhea" id="RHEA-COMP:9928"/>
        <dbReference type="ChEBI" id="CHEBI:15378"/>
        <dbReference type="ChEBI" id="CHEBI:29969"/>
        <dbReference type="ChEBI" id="CHEBI:64479"/>
        <dbReference type="ChEBI" id="CHEBI:78463"/>
        <dbReference type="ChEBI" id="CHEBI:78809"/>
        <dbReference type="EC" id="2.3.1.181"/>
    </reaction>
</comment>
<comment type="pathway">
    <text evidence="1">Protein modification; protein lipoylation via endogenous pathway; protein N(6)-(lipoyl)lysine from octanoyl-[acyl-carrier-protein]: step 1/2.</text>
</comment>
<comment type="subcellular location">
    <subcellularLocation>
        <location evidence="1">Cytoplasm</location>
    </subcellularLocation>
</comment>
<comment type="miscellaneous">
    <text evidence="1">In the reaction, the free carboxyl group of octanoic acid is attached via an amide linkage to the epsilon-amino group of a specific lysine residue of lipoyl domains of lipoate-dependent enzymes.</text>
</comment>
<comment type="similarity">
    <text evidence="1">Belongs to the LipB family.</text>
</comment>
<gene>
    <name evidence="1" type="primary">lipB</name>
    <name type="ordered locus">Acid345_4305</name>
</gene>
<feature type="chain" id="PRO_1000070954" description="Octanoyltransferase">
    <location>
        <begin position="1"/>
        <end position="251"/>
    </location>
</feature>
<feature type="domain" description="BPL/LPL catalytic" evidence="2">
    <location>
        <begin position="29"/>
        <end position="216"/>
    </location>
</feature>
<feature type="active site" description="Acyl-thioester intermediate" evidence="1">
    <location>
        <position position="177"/>
    </location>
</feature>
<feature type="binding site" evidence="1">
    <location>
        <begin position="74"/>
        <end position="81"/>
    </location>
    <ligand>
        <name>substrate</name>
    </ligand>
</feature>
<feature type="binding site" evidence="1">
    <location>
        <begin position="146"/>
        <end position="148"/>
    </location>
    <ligand>
        <name>substrate</name>
    </ligand>
</feature>
<feature type="binding site" evidence="1">
    <location>
        <begin position="159"/>
        <end position="161"/>
    </location>
    <ligand>
        <name>substrate</name>
    </ligand>
</feature>
<feature type="site" description="Lowers pKa of active site Cys" evidence="1">
    <location>
        <position position="143"/>
    </location>
</feature>
<proteinExistence type="inferred from homology"/>
<accession>Q1IIJ5</accession>
<keyword id="KW-0012">Acyltransferase</keyword>
<keyword id="KW-0963">Cytoplasm</keyword>
<keyword id="KW-1185">Reference proteome</keyword>
<keyword id="KW-0808">Transferase</keyword>